<name>SELO_SHISS</name>
<proteinExistence type="inferred from homology"/>
<comment type="function">
    <text evidence="1">Nucleotidyltransferase involved in the post-translational modification of proteins. It can catalyze the addition of adenosine monophosphate (AMP) or uridine monophosphate (UMP) to a protein, resulting in modifications known as AMPylation and UMPylation.</text>
</comment>
<comment type="catalytic activity">
    <reaction evidence="1">
        <text>L-seryl-[protein] + ATP = 3-O-(5'-adenylyl)-L-seryl-[protein] + diphosphate</text>
        <dbReference type="Rhea" id="RHEA:58120"/>
        <dbReference type="Rhea" id="RHEA-COMP:9863"/>
        <dbReference type="Rhea" id="RHEA-COMP:15073"/>
        <dbReference type="ChEBI" id="CHEBI:29999"/>
        <dbReference type="ChEBI" id="CHEBI:30616"/>
        <dbReference type="ChEBI" id="CHEBI:33019"/>
        <dbReference type="ChEBI" id="CHEBI:142516"/>
        <dbReference type="EC" id="2.7.7.108"/>
    </reaction>
</comment>
<comment type="catalytic activity">
    <reaction evidence="1">
        <text>L-threonyl-[protein] + ATP = 3-O-(5'-adenylyl)-L-threonyl-[protein] + diphosphate</text>
        <dbReference type="Rhea" id="RHEA:54292"/>
        <dbReference type="Rhea" id="RHEA-COMP:11060"/>
        <dbReference type="Rhea" id="RHEA-COMP:13847"/>
        <dbReference type="ChEBI" id="CHEBI:30013"/>
        <dbReference type="ChEBI" id="CHEBI:30616"/>
        <dbReference type="ChEBI" id="CHEBI:33019"/>
        <dbReference type="ChEBI" id="CHEBI:138113"/>
        <dbReference type="EC" id="2.7.7.108"/>
    </reaction>
</comment>
<comment type="catalytic activity">
    <reaction evidence="1">
        <text>L-tyrosyl-[protein] + ATP = O-(5'-adenylyl)-L-tyrosyl-[protein] + diphosphate</text>
        <dbReference type="Rhea" id="RHEA:54288"/>
        <dbReference type="Rhea" id="RHEA-COMP:10136"/>
        <dbReference type="Rhea" id="RHEA-COMP:13846"/>
        <dbReference type="ChEBI" id="CHEBI:30616"/>
        <dbReference type="ChEBI" id="CHEBI:33019"/>
        <dbReference type="ChEBI" id="CHEBI:46858"/>
        <dbReference type="ChEBI" id="CHEBI:83624"/>
        <dbReference type="EC" id="2.7.7.108"/>
    </reaction>
</comment>
<comment type="catalytic activity">
    <reaction evidence="1">
        <text>L-histidyl-[protein] + UTP = N(tele)-(5'-uridylyl)-L-histidyl-[protein] + diphosphate</text>
        <dbReference type="Rhea" id="RHEA:83891"/>
        <dbReference type="Rhea" id="RHEA-COMP:9745"/>
        <dbReference type="Rhea" id="RHEA-COMP:20239"/>
        <dbReference type="ChEBI" id="CHEBI:29979"/>
        <dbReference type="ChEBI" id="CHEBI:33019"/>
        <dbReference type="ChEBI" id="CHEBI:46398"/>
        <dbReference type="ChEBI" id="CHEBI:233474"/>
    </reaction>
</comment>
<comment type="catalytic activity">
    <reaction evidence="1">
        <text>L-seryl-[protein] + UTP = O-(5'-uridylyl)-L-seryl-[protein] + diphosphate</text>
        <dbReference type="Rhea" id="RHEA:64604"/>
        <dbReference type="Rhea" id="RHEA-COMP:9863"/>
        <dbReference type="Rhea" id="RHEA-COMP:16635"/>
        <dbReference type="ChEBI" id="CHEBI:29999"/>
        <dbReference type="ChEBI" id="CHEBI:33019"/>
        <dbReference type="ChEBI" id="CHEBI:46398"/>
        <dbReference type="ChEBI" id="CHEBI:156051"/>
    </reaction>
</comment>
<comment type="catalytic activity">
    <reaction evidence="1">
        <text>L-tyrosyl-[protein] + UTP = O-(5'-uridylyl)-L-tyrosyl-[protein] + diphosphate</text>
        <dbReference type="Rhea" id="RHEA:83887"/>
        <dbReference type="Rhea" id="RHEA-COMP:10136"/>
        <dbReference type="Rhea" id="RHEA-COMP:20238"/>
        <dbReference type="ChEBI" id="CHEBI:33019"/>
        <dbReference type="ChEBI" id="CHEBI:46398"/>
        <dbReference type="ChEBI" id="CHEBI:46858"/>
        <dbReference type="ChEBI" id="CHEBI:90602"/>
    </reaction>
</comment>
<comment type="cofactor">
    <cofactor evidence="1">
        <name>Mg(2+)</name>
        <dbReference type="ChEBI" id="CHEBI:18420"/>
    </cofactor>
    <cofactor evidence="1">
        <name>Mn(2+)</name>
        <dbReference type="ChEBI" id="CHEBI:29035"/>
    </cofactor>
</comment>
<comment type="similarity">
    <text evidence="1">Belongs to the SELO family.</text>
</comment>
<reference key="1">
    <citation type="journal article" date="2005" name="Nucleic Acids Res.">
        <title>Genome dynamics and diversity of Shigella species, the etiologic agents of bacillary dysentery.</title>
        <authorList>
            <person name="Yang F."/>
            <person name="Yang J."/>
            <person name="Zhang X."/>
            <person name="Chen L."/>
            <person name="Jiang Y."/>
            <person name="Yan Y."/>
            <person name="Tang X."/>
            <person name="Wang J."/>
            <person name="Xiong Z."/>
            <person name="Dong J."/>
            <person name="Xue Y."/>
            <person name="Zhu Y."/>
            <person name="Xu X."/>
            <person name="Sun L."/>
            <person name="Chen S."/>
            <person name="Nie H."/>
            <person name="Peng J."/>
            <person name="Xu J."/>
            <person name="Wang Y."/>
            <person name="Yuan Z."/>
            <person name="Wen Y."/>
            <person name="Yao Z."/>
            <person name="Shen Y."/>
            <person name="Qiang B."/>
            <person name="Hou Y."/>
            <person name="Yu J."/>
            <person name="Jin Q."/>
        </authorList>
    </citation>
    <scope>NUCLEOTIDE SEQUENCE [LARGE SCALE GENOMIC DNA]</scope>
    <source>
        <strain>Ss046</strain>
    </source>
</reference>
<organism>
    <name type="scientific">Shigella sonnei (strain Ss046)</name>
    <dbReference type="NCBI Taxonomy" id="300269"/>
    <lineage>
        <taxon>Bacteria</taxon>
        <taxon>Pseudomonadati</taxon>
        <taxon>Pseudomonadota</taxon>
        <taxon>Gammaproteobacteria</taxon>
        <taxon>Enterobacterales</taxon>
        <taxon>Enterobacteriaceae</taxon>
        <taxon>Shigella</taxon>
    </lineage>
</organism>
<protein>
    <recommendedName>
        <fullName evidence="1">Protein nucleotidyltransferase YdiU</fullName>
        <ecNumber evidence="1">2.7.7.-</ecNumber>
    </recommendedName>
    <alternativeName>
        <fullName evidence="1">Protein adenylyltransferase YdiU</fullName>
        <ecNumber evidence="1">2.7.7.108</ecNumber>
    </alternativeName>
    <alternativeName>
        <fullName evidence="1">Protein uridylyltransferase YdiU</fullName>
        <ecNumber evidence="1">2.7.7.-</ecNumber>
    </alternativeName>
</protein>
<feature type="chain" id="PRO_0000271870" description="Protein nucleotidyltransferase YdiU">
    <location>
        <begin position="1"/>
        <end position="478"/>
    </location>
</feature>
<feature type="active site" description="Proton acceptor" evidence="1">
    <location>
        <position position="246"/>
    </location>
</feature>
<feature type="binding site" evidence="1">
    <location>
        <position position="84"/>
    </location>
    <ligand>
        <name>ATP</name>
        <dbReference type="ChEBI" id="CHEBI:30616"/>
    </ligand>
</feature>
<feature type="binding site" evidence="1">
    <location>
        <position position="86"/>
    </location>
    <ligand>
        <name>ATP</name>
        <dbReference type="ChEBI" id="CHEBI:30616"/>
    </ligand>
</feature>
<feature type="binding site" evidence="1">
    <location>
        <position position="87"/>
    </location>
    <ligand>
        <name>ATP</name>
        <dbReference type="ChEBI" id="CHEBI:30616"/>
    </ligand>
</feature>
<feature type="binding site" evidence="1">
    <location>
        <position position="107"/>
    </location>
    <ligand>
        <name>ATP</name>
        <dbReference type="ChEBI" id="CHEBI:30616"/>
    </ligand>
</feature>
<feature type="binding site" evidence="1">
    <location>
        <position position="119"/>
    </location>
    <ligand>
        <name>ATP</name>
        <dbReference type="ChEBI" id="CHEBI:30616"/>
    </ligand>
</feature>
<feature type="binding site" evidence="1">
    <location>
        <position position="120"/>
    </location>
    <ligand>
        <name>ATP</name>
        <dbReference type="ChEBI" id="CHEBI:30616"/>
    </ligand>
</feature>
<feature type="binding site" evidence="1">
    <location>
        <position position="170"/>
    </location>
    <ligand>
        <name>ATP</name>
        <dbReference type="ChEBI" id="CHEBI:30616"/>
    </ligand>
</feature>
<feature type="binding site" evidence="1">
    <location>
        <position position="177"/>
    </location>
    <ligand>
        <name>ATP</name>
        <dbReference type="ChEBI" id="CHEBI:30616"/>
    </ligand>
</feature>
<feature type="binding site" evidence="1">
    <location>
        <position position="247"/>
    </location>
    <ligand>
        <name>Mg(2+)</name>
        <dbReference type="ChEBI" id="CHEBI:18420"/>
    </ligand>
</feature>
<feature type="binding site" evidence="1">
    <location>
        <position position="256"/>
    </location>
    <ligand>
        <name>ATP</name>
        <dbReference type="ChEBI" id="CHEBI:30616"/>
    </ligand>
</feature>
<feature type="binding site" evidence="1">
    <location>
        <position position="256"/>
    </location>
    <ligand>
        <name>Mg(2+)</name>
        <dbReference type="ChEBI" id="CHEBI:18420"/>
    </ligand>
</feature>
<dbReference type="EC" id="2.7.7.-" evidence="1"/>
<dbReference type="EC" id="2.7.7.108" evidence="1"/>
<dbReference type="EMBL" id="CP000038">
    <property type="protein sequence ID" value="AAZ88159.1"/>
    <property type="molecule type" value="Genomic_DNA"/>
</dbReference>
<dbReference type="RefSeq" id="WP_000175707.1">
    <property type="nucleotide sequence ID" value="NC_007384.1"/>
</dbReference>
<dbReference type="SMR" id="Q3Z253"/>
<dbReference type="GeneID" id="93775869"/>
<dbReference type="KEGG" id="ssn:SSON_1453"/>
<dbReference type="HOGENOM" id="CLU_010245_4_1_6"/>
<dbReference type="Proteomes" id="UP000002529">
    <property type="component" value="Chromosome"/>
</dbReference>
<dbReference type="GO" id="GO:0070733">
    <property type="term" value="F:AMPylase activity"/>
    <property type="evidence" value="ECO:0007669"/>
    <property type="project" value="RHEA"/>
</dbReference>
<dbReference type="GO" id="GO:0005524">
    <property type="term" value="F:ATP binding"/>
    <property type="evidence" value="ECO:0007669"/>
    <property type="project" value="UniProtKB-UniRule"/>
</dbReference>
<dbReference type="GO" id="GO:0000287">
    <property type="term" value="F:magnesium ion binding"/>
    <property type="evidence" value="ECO:0007669"/>
    <property type="project" value="UniProtKB-UniRule"/>
</dbReference>
<dbReference type="HAMAP" id="MF_00692">
    <property type="entry name" value="YdiU_SelO"/>
    <property type="match status" value="1"/>
</dbReference>
<dbReference type="InterPro" id="IPR054838">
    <property type="entry name" value="adnlytase_SelO"/>
</dbReference>
<dbReference type="InterPro" id="IPR003846">
    <property type="entry name" value="SelO"/>
</dbReference>
<dbReference type="NCBIfam" id="NF040880">
    <property type="entry name" value="adnlytase_SelO"/>
    <property type="match status" value="1"/>
</dbReference>
<dbReference type="NCBIfam" id="NF000658">
    <property type="entry name" value="PRK00029.1"/>
    <property type="match status" value="1"/>
</dbReference>
<dbReference type="PANTHER" id="PTHR32057">
    <property type="entry name" value="PROTEIN ADENYLYLTRANSFERASE SELO, MITOCHONDRIAL"/>
    <property type="match status" value="1"/>
</dbReference>
<dbReference type="PANTHER" id="PTHR32057:SF14">
    <property type="entry name" value="PROTEIN ADENYLYLTRANSFERASE SELO, MITOCHONDRIAL"/>
    <property type="match status" value="1"/>
</dbReference>
<dbReference type="Pfam" id="PF02696">
    <property type="entry name" value="SelO"/>
    <property type="match status" value="1"/>
</dbReference>
<keyword id="KW-0067">ATP-binding</keyword>
<keyword id="KW-0460">Magnesium</keyword>
<keyword id="KW-0464">Manganese</keyword>
<keyword id="KW-0479">Metal-binding</keyword>
<keyword id="KW-0547">Nucleotide-binding</keyword>
<keyword id="KW-0548">Nucleotidyltransferase</keyword>
<keyword id="KW-1185">Reference proteome</keyword>
<keyword id="KW-0808">Transferase</keyword>
<evidence type="ECO:0000255" key="1">
    <source>
        <dbReference type="HAMAP-Rule" id="MF_00692"/>
    </source>
</evidence>
<gene>
    <name evidence="1" type="primary">ydiU</name>
    <name evidence="1" type="synonym">selO</name>
    <name type="ordered locus">SSON_1453</name>
</gene>
<sequence length="478" mass="54321">MTLSFVTRWRDELPETYTALSPTPLNNARLIWHNTELANTLSIPSSLFKNGAGVWGGEALLPGMSPLAQVYSGHQFGVWAGQLGDGRGILLGEQLLADGTTMDWHLKGAGLTPYSRMGDGRAVLRSTIRESLASEAMHYLGIPTTRALSIVTSDSPVYRETAEPGAMLMRVAPSHLRFGHFEHFYYRRESEKVRQLADFAIRHYWSHLEDDEDKYRLWFSDVVARTASLIAQWQTVGFAHGVMNTDNMSLLGLTLDYGPFGFLDDYEPGFICNHSDHQGRYSFDNQPAVALWNLQRLAQTLSPFVAVDALNEALDSYQQVLLTHYGQRMRQKLGFITEQKEDNALLNELFSLMARERSDYTRTFRMLSLTEQHSTASPLRDEFIDRAAFDGWFARYRGRLQQDEVSDSERQQLMQSVNPALVLRNWLAQRAIEAAEKGDMTELHRLHGALRNPFSDRDDDYVSRPPDWGKRLEVSCSS</sequence>
<accession>Q3Z253</accession>